<gene>
    <name type="primary">Tas2r41</name>
    <name type="synonym">Tas2r12</name>
    <name type="synonym">Tas2r126</name>
    <name type="synonym">Tas2r26</name>
</gene>
<feature type="chain" id="PRO_0000082300" description="Taste receptor type 2 member 41">
    <location>
        <begin position="1"/>
        <end position="308"/>
    </location>
</feature>
<feature type="topological domain" description="Extracellular" evidence="2">
    <location>
        <begin position="1"/>
        <end position="7"/>
    </location>
</feature>
<feature type="transmembrane region" description="Helical; Name=1" evidence="2">
    <location>
        <begin position="8"/>
        <end position="28"/>
    </location>
</feature>
<feature type="topological domain" description="Cytoplasmic" evidence="2">
    <location>
        <begin position="29"/>
        <end position="60"/>
    </location>
</feature>
<feature type="transmembrane region" description="Helical; Name=2" evidence="2">
    <location>
        <begin position="61"/>
        <end position="81"/>
    </location>
</feature>
<feature type="topological domain" description="Extracellular" evidence="2">
    <location>
        <begin position="82"/>
        <end position="88"/>
    </location>
</feature>
<feature type="transmembrane region" description="Helical; Name=3" evidence="2">
    <location>
        <begin position="89"/>
        <end position="109"/>
    </location>
</feature>
<feature type="topological domain" description="Cytoplasmic" evidence="2">
    <location>
        <begin position="110"/>
        <end position="128"/>
    </location>
</feature>
<feature type="transmembrane region" description="Helical; Name=4" evidence="2">
    <location>
        <begin position="129"/>
        <end position="149"/>
    </location>
</feature>
<feature type="topological domain" description="Extracellular" evidence="2">
    <location>
        <begin position="150"/>
        <end position="186"/>
    </location>
</feature>
<feature type="transmembrane region" description="Helical; Name=5" evidence="2">
    <location>
        <begin position="187"/>
        <end position="207"/>
    </location>
</feature>
<feature type="topological domain" description="Cytoplasmic" evidence="2">
    <location>
        <begin position="208"/>
        <end position="239"/>
    </location>
</feature>
<feature type="transmembrane region" description="Helical; Name=6" evidence="2">
    <location>
        <begin position="240"/>
        <end position="260"/>
    </location>
</feature>
<feature type="topological domain" description="Extracellular" evidence="2">
    <location>
        <begin position="261"/>
        <end position="264"/>
    </location>
</feature>
<feature type="transmembrane region" description="Helical; Name=7" evidence="2">
    <location>
        <begin position="265"/>
        <end position="285"/>
    </location>
</feature>
<feature type="topological domain" description="Cytoplasmic" evidence="2">
    <location>
        <begin position="286"/>
        <end position="308"/>
    </location>
</feature>
<feature type="glycosylation site" description="N-linked (GlcNAc...) asparagine" evidence="2">
    <location>
        <position position="152"/>
    </location>
</feature>
<feature type="glycosylation site" description="N-linked (GlcNAc...) asparagine" evidence="2">
    <location>
        <position position="167"/>
    </location>
</feature>
<comment type="function">
    <text evidence="1">Receptor that may play a role in the perception of bitterness and is gustducin-linked. May play a role in sensing the chemical composition of the gastrointestinal content. The activity of this receptor may stimulate alpha gustducin, mediate PLC-beta-2 activation and lead to the gating of TRPM5 (By similarity).</text>
</comment>
<comment type="subcellular location">
    <subcellularLocation>
        <location>Membrane</location>
        <topology>Multi-pass membrane protein</topology>
    </subcellularLocation>
</comment>
<comment type="tissue specificity">
    <text>Expressed in subsets of taste receptor cells of the tongue and palate epithelium and exclusively in gustducin-positive cells.</text>
</comment>
<comment type="miscellaneous">
    <text>Most taste cells may be activated by a limited number of bitter compounds; individual taste cells can discriminate among bitter stimuli.</text>
</comment>
<comment type="similarity">
    <text evidence="3">Belongs to the G-protein coupled receptor T2R family.</text>
</comment>
<comment type="caution">
    <text evidence="3">This protein was previously referred to as T2R26 or T2R12 but is now considered to be the ortholog of human TAS2R41.</text>
</comment>
<keyword id="KW-0297">G-protein coupled receptor</keyword>
<keyword id="KW-0325">Glycoprotein</keyword>
<keyword id="KW-0472">Membrane</keyword>
<keyword id="KW-0675">Receptor</keyword>
<keyword id="KW-1185">Reference proteome</keyword>
<keyword id="KW-0716">Sensory transduction</keyword>
<keyword id="KW-0919">Taste</keyword>
<keyword id="KW-0807">Transducer</keyword>
<keyword id="KW-0812">Transmembrane</keyword>
<keyword id="KW-1133">Transmembrane helix</keyword>
<protein>
    <recommendedName>
        <fullName>Taste receptor type 2 member 41</fullName>
        <shortName>T2R41</shortName>
    </recommendedName>
    <alternativeName>
        <fullName>T2R12</fullName>
    </alternativeName>
    <alternativeName>
        <fullName>T2R26</fullName>
    </alternativeName>
</protein>
<accession>P59532</accession>
<accession>A0JNU7</accession>
<accession>Q7M704</accession>
<dbReference type="EMBL" id="AC155654">
    <property type="status" value="NOT_ANNOTATED_CDS"/>
    <property type="molecule type" value="Genomic_DNA"/>
</dbReference>
<dbReference type="EMBL" id="BC126974">
    <property type="protein sequence ID" value="AAI26975.1"/>
    <property type="molecule type" value="mRNA"/>
</dbReference>
<dbReference type="EMBL" id="BK001098">
    <property type="protein sequence ID" value="DAA01237.1"/>
    <property type="molecule type" value="Genomic_DNA"/>
</dbReference>
<dbReference type="CCDS" id="CCDS20070.1"/>
<dbReference type="RefSeq" id="NP_996911.1">
    <property type="nucleotide sequence ID" value="NM_207028.1"/>
</dbReference>
<dbReference type="SMR" id="P59532"/>
<dbReference type="FunCoup" id="P59532">
    <property type="interactions" value="755"/>
</dbReference>
<dbReference type="STRING" id="10090.ENSMUSP00000056581"/>
<dbReference type="GlyCosmos" id="P59532">
    <property type="glycosylation" value="2 sites, No reported glycans"/>
</dbReference>
<dbReference type="GlyGen" id="P59532">
    <property type="glycosylation" value="2 sites"/>
</dbReference>
<dbReference type="iPTMnet" id="P59532"/>
<dbReference type="PhosphoSitePlus" id="P59532"/>
<dbReference type="PaxDb" id="10090-ENSMUSP00000056581"/>
<dbReference type="Antibodypedia" id="32664">
    <property type="antibodies" value="100 antibodies from 18 providers"/>
</dbReference>
<dbReference type="DNASU" id="387353"/>
<dbReference type="Ensembl" id="ENSMUST00000059534.5">
    <property type="protein sequence ID" value="ENSMUSP00000056581.5"/>
    <property type="gene ID" value="ENSMUSG00000048284.5"/>
</dbReference>
<dbReference type="GeneID" id="387353"/>
<dbReference type="KEGG" id="mmu:387353"/>
<dbReference type="UCSC" id="uc009brh.1">
    <property type="organism name" value="mouse"/>
</dbReference>
<dbReference type="AGR" id="MGI:2681273"/>
<dbReference type="CTD" id="387353"/>
<dbReference type="MGI" id="MGI:2681273">
    <property type="gene designation" value="Tas2r126"/>
</dbReference>
<dbReference type="VEuPathDB" id="HostDB:ENSMUSG00000048284"/>
<dbReference type="eggNOG" id="ENOG502S2SI">
    <property type="taxonomic scope" value="Eukaryota"/>
</dbReference>
<dbReference type="GeneTree" id="ENSGT01100000263477"/>
<dbReference type="HOGENOM" id="CLU_072337_1_1_1"/>
<dbReference type="InParanoid" id="P59532"/>
<dbReference type="OMA" id="FCLQWVG"/>
<dbReference type="OrthoDB" id="9896661at2759"/>
<dbReference type="PhylomeDB" id="P59532"/>
<dbReference type="TreeFam" id="TF335891"/>
<dbReference type="Reactome" id="R-MMU-418594">
    <property type="pathway name" value="G alpha (i) signalling events"/>
</dbReference>
<dbReference type="Reactome" id="R-MMU-420499">
    <property type="pathway name" value="Class C/3 (Metabotropic glutamate/pheromone receptors)"/>
</dbReference>
<dbReference type="Reactome" id="R-MMU-9717207">
    <property type="pathway name" value="Sensory perception of sweet, bitter, and umami (glutamate) taste"/>
</dbReference>
<dbReference type="BioGRID-ORCS" id="387353">
    <property type="hits" value="1 hit in 75 CRISPR screens"/>
</dbReference>
<dbReference type="PRO" id="PR:P59532"/>
<dbReference type="Proteomes" id="UP000000589">
    <property type="component" value="Chromosome 6"/>
</dbReference>
<dbReference type="RNAct" id="P59532">
    <property type="molecule type" value="protein"/>
</dbReference>
<dbReference type="Bgee" id="ENSMUSG00000048284">
    <property type="expression patterns" value="Expressed in mesodermal cell in embryo"/>
</dbReference>
<dbReference type="GO" id="GO:0016020">
    <property type="term" value="C:membrane"/>
    <property type="evidence" value="ECO:0007669"/>
    <property type="project" value="UniProtKB-SubCell"/>
</dbReference>
<dbReference type="GO" id="GO:0033038">
    <property type="term" value="F:bitter taste receptor activity"/>
    <property type="evidence" value="ECO:0007669"/>
    <property type="project" value="InterPro"/>
</dbReference>
<dbReference type="GO" id="GO:0004930">
    <property type="term" value="F:G protein-coupled receptor activity"/>
    <property type="evidence" value="ECO:0007669"/>
    <property type="project" value="UniProtKB-KW"/>
</dbReference>
<dbReference type="GO" id="GO:0001580">
    <property type="term" value="P:detection of chemical stimulus involved in sensory perception of bitter taste"/>
    <property type="evidence" value="ECO:0000304"/>
    <property type="project" value="MGI"/>
</dbReference>
<dbReference type="CDD" id="cd15018">
    <property type="entry name" value="7tm_TAS2R41-like"/>
    <property type="match status" value="1"/>
</dbReference>
<dbReference type="FunFam" id="1.20.1070.10:FF:000055">
    <property type="entry name" value="Taste receptor type 2"/>
    <property type="match status" value="1"/>
</dbReference>
<dbReference type="Gene3D" id="1.20.1070.10">
    <property type="entry name" value="Rhodopsin 7-helix transmembrane proteins"/>
    <property type="match status" value="1"/>
</dbReference>
<dbReference type="InterPro" id="IPR007960">
    <property type="entry name" value="TAS2R"/>
</dbReference>
<dbReference type="PANTHER" id="PTHR11394">
    <property type="entry name" value="TASTE RECEPTOR TYPE 2"/>
    <property type="match status" value="1"/>
</dbReference>
<dbReference type="PANTHER" id="PTHR11394:SF73">
    <property type="entry name" value="TASTE RECEPTOR TYPE 2 MEMBER 41"/>
    <property type="match status" value="1"/>
</dbReference>
<dbReference type="Pfam" id="PF05296">
    <property type="entry name" value="TAS2R"/>
    <property type="match status" value="1"/>
</dbReference>
<dbReference type="SUPFAM" id="SSF81321">
    <property type="entry name" value="Family A G protein-coupled receptor-like"/>
    <property type="match status" value="1"/>
</dbReference>
<proteinExistence type="evidence at transcript level"/>
<reference key="1">
    <citation type="journal article" date="2000" name="Cell">
        <title>A novel family of mammalian taste receptors.</title>
        <authorList>
            <person name="Adler E."/>
            <person name="Hoon M.A."/>
            <person name="Mueller K.L."/>
            <person name="Chandrashekar J."/>
            <person name="Ryba N.J.P."/>
            <person name="Zuker C.S."/>
        </authorList>
    </citation>
    <scope>NUCLEOTIDE SEQUENCE [GENOMIC DNA]</scope>
</reference>
<reference key="2">
    <citation type="journal article" date="2009" name="PLoS Biol.">
        <title>Lineage-specific biology revealed by a finished genome assembly of the mouse.</title>
        <authorList>
            <person name="Church D.M."/>
            <person name="Goodstadt L."/>
            <person name="Hillier L.W."/>
            <person name="Zody M.C."/>
            <person name="Goldstein S."/>
            <person name="She X."/>
            <person name="Bult C.J."/>
            <person name="Agarwala R."/>
            <person name="Cherry J.L."/>
            <person name="DiCuccio M."/>
            <person name="Hlavina W."/>
            <person name="Kapustin Y."/>
            <person name="Meric P."/>
            <person name="Maglott D."/>
            <person name="Birtle Z."/>
            <person name="Marques A.C."/>
            <person name="Graves T."/>
            <person name="Zhou S."/>
            <person name="Teague B."/>
            <person name="Potamousis K."/>
            <person name="Churas C."/>
            <person name="Place M."/>
            <person name="Herschleb J."/>
            <person name="Runnheim R."/>
            <person name="Forrest D."/>
            <person name="Amos-Landgraf J."/>
            <person name="Schwartz D.C."/>
            <person name="Cheng Z."/>
            <person name="Lindblad-Toh K."/>
            <person name="Eichler E.E."/>
            <person name="Ponting C.P."/>
        </authorList>
    </citation>
    <scope>NUCLEOTIDE SEQUENCE [LARGE SCALE GENOMIC DNA]</scope>
    <source>
        <strain>C57BL/6J</strain>
    </source>
</reference>
<reference key="3">
    <citation type="journal article" date="2004" name="Genome Res.">
        <title>The status, quality, and expansion of the NIH full-length cDNA project: the Mammalian Gene Collection (MGC).</title>
        <authorList>
            <consortium name="The MGC Project Team"/>
        </authorList>
    </citation>
    <scope>NUCLEOTIDE SEQUENCE [LARGE SCALE MRNA]</scope>
</reference>
<reference key="4">
    <citation type="journal article" date="2003" name="Mol. Biol. Evol.">
        <title>Adaptive diversification of bitter taste receptor genes in mammalian evolution.</title>
        <authorList>
            <person name="Shi P."/>
            <person name="Zhang J."/>
            <person name="Yang H."/>
            <person name="Zhang Y.-P."/>
        </authorList>
    </citation>
    <scope>IDENTIFICATION</scope>
</reference>
<reference key="5">
    <citation type="journal article" date="2002" name="Curr. Opin. Neurobiol.">
        <title>Receptors for bitter and sweet taste.</title>
        <authorList>
            <person name="Montmayeur J.-P."/>
            <person name="Matsunami H."/>
        </authorList>
    </citation>
    <scope>REVIEW</scope>
</reference>
<reference key="6">
    <citation type="journal article" date="2002" name="J. Biol. Chem.">
        <title>Molecular mechanisms of bitter and sweet taste transduction.</title>
        <authorList>
            <person name="Margolskee R.F."/>
        </authorList>
    </citation>
    <scope>REVIEW</scope>
</reference>
<reference key="7">
    <citation type="journal article" date="2003" name="Cell">
        <title>Coding of sweet, bitter, and umami tastes: different receptor cells sharing similar signaling pathways.</title>
        <authorList>
            <person name="Zhang Y."/>
            <person name="Hoon M.A."/>
            <person name="Chandrashekar J."/>
            <person name="Mueller K.L."/>
            <person name="Cook B."/>
            <person name="Wu D."/>
            <person name="Zuker C.S."/>
            <person name="Ryba N.J."/>
        </authorList>
    </citation>
    <scope>REVIEW</scope>
</reference>
<name>T2R41_MOUSE</name>
<evidence type="ECO:0000250" key="1"/>
<evidence type="ECO:0000255" key="2"/>
<evidence type="ECO:0000305" key="3"/>
<sequence>MLPTLSVFFMLTFVLLCFLGILANGFIVLMLSREWLLRGRLLPSDMILFSLGTSRFFQQCVGLVNSFYYFLHLVEYSGSLARQLISLHWDFLNSATFWFCTWLSVLFCIKIANFSHPAFLWLKWRFPALVPWFLLGSILVSVIVTLLFFWGNHTIYQAFLRRKFTGNTTFKEWNRRLEIDYFMPLKVVTMSIPCSLFLVSILLLISSLRRHSLRMQHNTHSLQDPNVQAHSRALKSLISFLVLYAVSFVSMIIDATVFISSDNVWYWPWQIILYFCMSVHPFILITNNLRFRGTFRQLLLLARGFWVA</sequence>
<organism>
    <name type="scientific">Mus musculus</name>
    <name type="common">Mouse</name>
    <dbReference type="NCBI Taxonomy" id="10090"/>
    <lineage>
        <taxon>Eukaryota</taxon>
        <taxon>Metazoa</taxon>
        <taxon>Chordata</taxon>
        <taxon>Craniata</taxon>
        <taxon>Vertebrata</taxon>
        <taxon>Euteleostomi</taxon>
        <taxon>Mammalia</taxon>
        <taxon>Eutheria</taxon>
        <taxon>Euarchontoglires</taxon>
        <taxon>Glires</taxon>
        <taxon>Rodentia</taxon>
        <taxon>Myomorpha</taxon>
        <taxon>Muroidea</taxon>
        <taxon>Muridae</taxon>
        <taxon>Murinae</taxon>
        <taxon>Mus</taxon>
        <taxon>Mus</taxon>
    </lineage>
</organism>